<organism>
    <name type="scientific">Gallus gallus</name>
    <name type="common">Chicken</name>
    <dbReference type="NCBI Taxonomy" id="9031"/>
    <lineage>
        <taxon>Eukaryota</taxon>
        <taxon>Metazoa</taxon>
        <taxon>Chordata</taxon>
        <taxon>Craniata</taxon>
        <taxon>Vertebrata</taxon>
        <taxon>Euteleostomi</taxon>
        <taxon>Archelosauria</taxon>
        <taxon>Archosauria</taxon>
        <taxon>Dinosauria</taxon>
        <taxon>Saurischia</taxon>
        <taxon>Theropoda</taxon>
        <taxon>Coelurosauria</taxon>
        <taxon>Aves</taxon>
        <taxon>Neognathae</taxon>
        <taxon>Galloanserae</taxon>
        <taxon>Galliformes</taxon>
        <taxon>Phasianidae</taxon>
        <taxon>Phasianinae</taxon>
        <taxon>Gallus</taxon>
    </lineage>
</organism>
<sequence length="736" mass="79721">MASEGMILTNHDHQIRVGVLTVSDSCFRNLAEDRSGINLKDLVQDPSLLGGTISAYKIVPDEIEEIKETLIDWCDEKELNLILTTGGTGFAPRDVTPEATKEVIEREAPGMALAMLMGSLNVTPLGMLSRPVCGIRGKTLIINLPGSKKGSQECFQFILPALPHAIDLLRDAIVKVKEVHDELEDLPSPPPPLSPPPTTSPHKQTEDKGVQCEEEEEEKKDSGVASTEDSSSSHITAAAIAAKIPDSIISRGVQVLPRDTASLSTTPSESPRAQATSRLSTASCPTPKVQSRCSSKENILRASHSAVDITKVARRHRMSPFPLTSMDKAFITVLEMTPVLGTEIINYRDGMGRVLAQDVYAKDNLPPFPASVKDGYAVRAADGPGDRFIIGESQAGEQPTQTVMPGQVMRVTTGAPIPCGADAVVQVEDTELIRESDDGTEELEVRILVQARPGQDIRPIGHDIKRGECVLAKGTHTGPSEVGLLATVGVTEVEVNKFPVVAVMSTGNELLNPEDDVLPGKIRDSNRSTLLATIQAHGYPTINLGIVGDNPDDLLNALNERISRADVIITSGGVSMGGKYYLKQVLDIDLHAQIHFGRVFMKPGLPTTFATLDIDGVRKIIFALPGQSVSAVVTCNLFVVPALRKMQGILDPRPTIIKARLSCDVKLDPRPEYHRCILTWHHQEPHPWAQSTGNQMSSRLMSMRSANGLLMLPPKTEQYVELHKGEVVDVMVIGRL</sequence>
<proteinExistence type="evidence at protein level"/>
<feature type="chain" id="PRO_0000269040" description="Gephyrin">
    <location>
        <begin position="1"/>
        <end position="736"/>
    </location>
</feature>
<feature type="region of interest" description="MPT Mo-transferase">
    <location>
        <begin position="14"/>
        <end position="153"/>
    </location>
</feature>
<feature type="region of interest" description="Disordered" evidence="5">
    <location>
        <begin position="181"/>
        <end position="232"/>
    </location>
</feature>
<feature type="region of interest" description="Disordered" evidence="5">
    <location>
        <begin position="260"/>
        <end position="290"/>
    </location>
</feature>
<feature type="region of interest" description="MPT adenylyltransferase">
    <location>
        <begin position="294"/>
        <end position="736"/>
    </location>
</feature>
<feature type="compositionally biased region" description="Pro residues" evidence="5">
    <location>
        <begin position="187"/>
        <end position="199"/>
    </location>
</feature>
<feature type="compositionally biased region" description="Polar residues" evidence="5">
    <location>
        <begin position="261"/>
        <end position="290"/>
    </location>
</feature>
<accession>Q9PW38</accession>
<comment type="function">
    <text evidence="4 8">Microtubule-associated protein involved in membrane protein-cytoskeleton interactions. It is thought to anchor the inhibitory glycine receptor (GLYR) to subsynaptic microtubules (Probable). Acts as a major instructive molecule at inhibitory synapses, where it also clusters GABA type A receptors (By similarity).</text>
</comment>
<comment type="function">
    <text evidence="4">Also has a catalytic activity and catalyzes two steps in the biosynthesis of the molybdenum cofactor. In the first step, molybdopterin is adenylated. Subsequently, molybdate is inserted into adenylated molybdopterin and AMP is released.</text>
</comment>
<comment type="catalytic activity">
    <reaction evidence="4">
        <text>molybdopterin + ATP + H(+) = adenylyl-molybdopterin + diphosphate</text>
        <dbReference type="Rhea" id="RHEA:31331"/>
        <dbReference type="ChEBI" id="CHEBI:15378"/>
        <dbReference type="ChEBI" id="CHEBI:30616"/>
        <dbReference type="ChEBI" id="CHEBI:33019"/>
        <dbReference type="ChEBI" id="CHEBI:58698"/>
        <dbReference type="ChEBI" id="CHEBI:62727"/>
        <dbReference type="EC" id="2.7.7.75"/>
    </reaction>
    <physiologicalReaction direction="left-to-right" evidence="4">
        <dbReference type="Rhea" id="RHEA:31332"/>
    </physiologicalReaction>
</comment>
<comment type="catalytic activity">
    <reaction evidence="4">
        <text>adenylyl-molybdopterin + molybdate = Mo-molybdopterin + AMP + H(+)</text>
        <dbReference type="Rhea" id="RHEA:35047"/>
        <dbReference type="ChEBI" id="CHEBI:15378"/>
        <dbReference type="ChEBI" id="CHEBI:36264"/>
        <dbReference type="ChEBI" id="CHEBI:62727"/>
        <dbReference type="ChEBI" id="CHEBI:71302"/>
        <dbReference type="ChEBI" id="CHEBI:456215"/>
        <dbReference type="EC" id="2.10.1.1"/>
    </reaction>
    <physiologicalReaction direction="left-to-right" evidence="4">
        <dbReference type="Rhea" id="RHEA:35048"/>
    </physiologicalReaction>
</comment>
<comment type="cofactor">
    <cofactor evidence="1">
        <name>Mg(2+)</name>
        <dbReference type="ChEBI" id="CHEBI:18420"/>
    </cofactor>
</comment>
<comment type="pathway">
    <text evidence="4">Cofactor biosynthesis; molybdopterin biosynthesis.</text>
</comment>
<comment type="subunit">
    <text evidence="4 6">Homotrimer, homodimer and homooligomer (By similarity). Interacts with glycine receptors (PubMed:10649567).</text>
</comment>
<comment type="subcellular location">
    <subcellularLocation>
        <location evidence="6">Postsynaptic cell membrane</location>
        <topology evidence="2">Lipid-anchor</topology>
        <orientation evidence="2">Cytoplasmic side</orientation>
    </subcellularLocation>
    <subcellularLocation>
        <location evidence="2">Cell membrane</location>
        <topology evidence="2">Lipid-anchor</topology>
        <orientation evidence="2">Cytoplasmic side</orientation>
    </subcellularLocation>
    <subcellularLocation>
        <location evidence="4">Cytoplasm</location>
        <location evidence="4">Cytosol</location>
    </subcellularLocation>
    <subcellularLocation>
        <location evidence="2">Cytoplasm</location>
        <location evidence="2">Cytoskeleton</location>
    </subcellularLocation>
    <subcellularLocation>
        <location evidence="4">Cell projection</location>
        <location evidence="4">Dendrite</location>
    </subcellularLocation>
    <subcellularLocation>
        <location evidence="3">Postsynaptic density</location>
    </subcellularLocation>
</comment>
<comment type="similarity">
    <text evidence="7">In the N-terminal section; belongs to the MoaB/Mog family.</text>
</comment>
<comment type="similarity">
    <text evidence="7">In the C-terminal section; belongs to the MoeA family.</text>
</comment>
<reference key="1">
    <citation type="journal article" date="2000" name="Nat. Neurosci.">
        <title>Receptors with opposing functions are in postsynaptic microdomains under one presynaptic terminal.</title>
        <authorList>
            <person name="Tsen G."/>
            <person name="Williams B."/>
            <person name="Allaire P."/>
            <person name="Zhou Y.-D."/>
            <person name="Ikonomov O."/>
            <person name="Kondova I."/>
            <person name="Jacob M.H."/>
        </authorList>
    </citation>
    <scope>NUCLEOTIDE SEQUENCE [MRNA]</scope>
    <scope>SUBUNIT</scope>
    <scope>SUBCELLULAR LOCATION</scope>
    <scope>FUNCTION</scope>
    <source>
        <tissue>Brain</tissue>
    </source>
</reference>
<protein>
    <recommendedName>
        <fullName>Gephyrin</fullName>
    </recommendedName>
    <domain>
        <recommendedName>
            <fullName>Molybdopterin adenylyltransferase</fullName>
            <shortName>MPT adenylyltransferase</shortName>
            <ecNumber evidence="4">2.7.7.75</ecNumber>
        </recommendedName>
        <alternativeName>
            <fullName>Domain G</fullName>
        </alternativeName>
    </domain>
    <domain>
        <recommendedName>
            <fullName>Molybdopterin molybdenumtransferase</fullName>
            <shortName>MPT Mo-transferase</shortName>
            <ecNumber evidence="4">2.10.1.1</ecNumber>
        </recommendedName>
        <alternativeName>
            <fullName>Domain E</fullName>
        </alternativeName>
    </domain>
</protein>
<keyword id="KW-0067">ATP-binding</keyword>
<keyword id="KW-1003">Cell membrane</keyword>
<keyword id="KW-0966">Cell projection</keyword>
<keyword id="KW-0963">Cytoplasm</keyword>
<keyword id="KW-0206">Cytoskeleton</keyword>
<keyword id="KW-0449">Lipoprotein</keyword>
<keyword id="KW-0460">Magnesium</keyword>
<keyword id="KW-0472">Membrane</keyword>
<keyword id="KW-0479">Metal-binding</keyword>
<keyword id="KW-0500">Molybdenum</keyword>
<keyword id="KW-0501">Molybdenum cofactor biosynthesis</keyword>
<keyword id="KW-0511">Multifunctional enzyme</keyword>
<keyword id="KW-0547">Nucleotide-binding</keyword>
<keyword id="KW-0628">Postsynaptic cell membrane</keyword>
<keyword id="KW-1185">Reference proteome</keyword>
<keyword id="KW-0770">Synapse</keyword>
<keyword id="KW-0808">Transferase</keyword>
<dbReference type="EC" id="2.7.7.75" evidence="4"/>
<dbReference type="EC" id="2.10.1.1" evidence="4"/>
<dbReference type="EMBL" id="AF174130">
    <property type="protein sequence ID" value="AAD49748.1"/>
    <property type="molecule type" value="Genomic_DNA"/>
</dbReference>
<dbReference type="SMR" id="Q9PW38"/>
<dbReference type="FunCoup" id="Q9PW38">
    <property type="interactions" value="1400"/>
</dbReference>
<dbReference type="STRING" id="9031.ENSGALP00000067160"/>
<dbReference type="PaxDb" id="9031-ENSGALP00000031974"/>
<dbReference type="VEuPathDB" id="HostDB:geneid_428878"/>
<dbReference type="eggNOG" id="KOG2371">
    <property type="taxonomic scope" value="Eukaryota"/>
</dbReference>
<dbReference type="InParanoid" id="Q9PW38"/>
<dbReference type="OrthoDB" id="4349954at2759"/>
<dbReference type="PhylomeDB" id="Q9PW38"/>
<dbReference type="UniPathway" id="UPA00344"/>
<dbReference type="Proteomes" id="UP000000539">
    <property type="component" value="Unassembled WGS sequence"/>
</dbReference>
<dbReference type="GO" id="GO:0005737">
    <property type="term" value="C:cytoplasm"/>
    <property type="evidence" value="ECO:0000318"/>
    <property type="project" value="GO_Central"/>
</dbReference>
<dbReference type="GO" id="GO:0005856">
    <property type="term" value="C:cytoskeleton"/>
    <property type="evidence" value="ECO:0007669"/>
    <property type="project" value="UniProtKB-SubCell"/>
</dbReference>
<dbReference type="GO" id="GO:0005829">
    <property type="term" value="C:cytosol"/>
    <property type="evidence" value="ECO:0000250"/>
    <property type="project" value="UniProtKB"/>
</dbReference>
<dbReference type="GO" id="GO:0030425">
    <property type="term" value="C:dendrite"/>
    <property type="evidence" value="ECO:0000250"/>
    <property type="project" value="UniProtKB"/>
</dbReference>
<dbReference type="GO" id="GO:0014069">
    <property type="term" value="C:postsynaptic density"/>
    <property type="evidence" value="ECO:0000250"/>
    <property type="project" value="UniProtKB"/>
</dbReference>
<dbReference type="GO" id="GO:0045211">
    <property type="term" value="C:postsynaptic membrane"/>
    <property type="evidence" value="ECO:0000250"/>
    <property type="project" value="UniProtKB"/>
</dbReference>
<dbReference type="GO" id="GO:0099572">
    <property type="term" value="C:postsynaptic specialization"/>
    <property type="evidence" value="ECO:0000318"/>
    <property type="project" value="GO_Central"/>
</dbReference>
<dbReference type="GO" id="GO:0097060">
    <property type="term" value="C:synaptic membrane"/>
    <property type="evidence" value="ECO:0000250"/>
    <property type="project" value="UniProtKB"/>
</dbReference>
<dbReference type="GO" id="GO:0005524">
    <property type="term" value="F:ATP binding"/>
    <property type="evidence" value="ECO:0007669"/>
    <property type="project" value="UniProtKB-KW"/>
</dbReference>
<dbReference type="GO" id="GO:0042802">
    <property type="term" value="F:identical protein binding"/>
    <property type="evidence" value="ECO:0000250"/>
    <property type="project" value="UniProtKB"/>
</dbReference>
<dbReference type="GO" id="GO:0046872">
    <property type="term" value="F:metal ion binding"/>
    <property type="evidence" value="ECO:0007669"/>
    <property type="project" value="UniProtKB-KW"/>
</dbReference>
<dbReference type="GO" id="GO:0061598">
    <property type="term" value="F:molybdopterin adenylyltransferase activity"/>
    <property type="evidence" value="ECO:0007669"/>
    <property type="project" value="UniProtKB-EC"/>
</dbReference>
<dbReference type="GO" id="GO:0061599">
    <property type="term" value="F:molybdopterin molybdotransferase activity"/>
    <property type="evidence" value="ECO:0000318"/>
    <property type="project" value="GO_Central"/>
</dbReference>
<dbReference type="GO" id="GO:0007529">
    <property type="term" value="P:establishment of synaptic specificity at neuromuscular junction"/>
    <property type="evidence" value="ECO:0000318"/>
    <property type="project" value="GO_Central"/>
</dbReference>
<dbReference type="GO" id="GO:0097112">
    <property type="term" value="P:gamma-aminobutyric acid receptor clustering"/>
    <property type="evidence" value="ECO:0000250"/>
    <property type="project" value="UniProtKB"/>
</dbReference>
<dbReference type="GO" id="GO:0072579">
    <property type="term" value="P:glycine receptor clustering"/>
    <property type="evidence" value="ECO:0000318"/>
    <property type="project" value="GO_Central"/>
</dbReference>
<dbReference type="GO" id="GO:0006777">
    <property type="term" value="P:Mo-molybdopterin cofactor biosynthetic process"/>
    <property type="evidence" value="ECO:0000318"/>
    <property type="project" value="GO_Central"/>
</dbReference>
<dbReference type="CDD" id="cd00887">
    <property type="entry name" value="MoeA"/>
    <property type="match status" value="1"/>
</dbReference>
<dbReference type="CDD" id="cd00886">
    <property type="entry name" value="MogA_MoaB"/>
    <property type="match status" value="1"/>
</dbReference>
<dbReference type="FunFam" id="2.170.190.11:FF:000001">
    <property type="entry name" value="Molybdopterin molybdenumtransferase"/>
    <property type="match status" value="1"/>
</dbReference>
<dbReference type="FunFam" id="2.40.340.10:FF:000001">
    <property type="entry name" value="Molybdopterin molybdenumtransferase"/>
    <property type="match status" value="1"/>
</dbReference>
<dbReference type="FunFam" id="3.40.980.10:FF:000001">
    <property type="entry name" value="Molybdopterin molybdenumtransferase"/>
    <property type="match status" value="1"/>
</dbReference>
<dbReference type="FunFam" id="3.40.980.10:FF:000002">
    <property type="entry name" value="Molybdopterin molybdenumtransferase"/>
    <property type="match status" value="1"/>
</dbReference>
<dbReference type="FunFam" id="3.90.105.10:FF:000004">
    <property type="entry name" value="Molybdopterin molybdenumtransferase"/>
    <property type="match status" value="1"/>
</dbReference>
<dbReference type="Gene3D" id="3.40.980.10">
    <property type="entry name" value="MoaB/Mog-like domain"/>
    <property type="match status" value="2"/>
</dbReference>
<dbReference type="Gene3D" id="2.40.340.10">
    <property type="entry name" value="MoeA, C-terminal, domain IV"/>
    <property type="match status" value="1"/>
</dbReference>
<dbReference type="Gene3D" id="3.90.105.10">
    <property type="entry name" value="Molybdopterin biosynthesis moea protein, domain 2"/>
    <property type="match status" value="1"/>
</dbReference>
<dbReference type="Gene3D" id="2.170.190.11">
    <property type="entry name" value="Molybdopterin biosynthesis moea protein, domain 3"/>
    <property type="match status" value="1"/>
</dbReference>
<dbReference type="InterPro" id="IPR036425">
    <property type="entry name" value="MoaB/Mog-like_dom_sf"/>
</dbReference>
<dbReference type="InterPro" id="IPR001453">
    <property type="entry name" value="MoaB/Mog_dom"/>
</dbReference>
<dbReference type="InterPro" id="IPR008284">
    <property type="entry name" value="MoCF_biosynth_CS"/>
</dbReference>
<dbReference type="InterPro" id="IPR038987">
    <property type="entry name" value="MoeA-like"/>
</dbReference>
<dbReference type="InterPro" id="IPR005111">
    <property type="entry name" value="MoeA_C_domain_IV"/>
</dbReference>
<dbReference type="InterPro" id="IPR036688">
    <property type="entry name" value="MoeA_C_domain_IV_sf"/>
</dbReference>
<dbReference type="InterPro" id="IPR005110">
    <property type="entry name" value="MoeA_linker/N"/>
</dbReference>
<dbReference type="InterPro" id="IPR036135">
    <property type="entry name" value="MoeA_linker/N_sf"/>
</dbReference>
<dbReference type="NCBIfam" id="NF045515">
    <property type="entry name" value="Glp_gephyrin"/>
    <property type="match status" value="1"/>
</dbReference>
<dbReference type="NCBIfam" id="TIGR00177">
    <property type="entry name" value="molyb_syn"/>
    <property type="match status" value="1"/>
</dbReference>
<dbReference type="PANTHER" id="PTHR10192:SF5">
    <property type="entry name" value="GEPHYRIN"/>
    <property type="match status" value="1"/>
</dbReference>
<dbReference type="PANTHER" id="PTHR10192">
    <property type="entry name" value="MOLYBDOPTERIN BIOSYNTHESIS PROTEIN"/>
    <property type="match status" value="1"/>
</dbReference>
<dbReference type="Pfam" id="PF00994">
    <property type="entry name" value="MoCF_biosynth"/>
    <property type="match status" value="2"/>
</dbReference>
<dbReference type="Pfam" id="PF03454">
    <property type="entry name" value="MoeA_C"/>
    <property type="match status" value="1"/>
</dbReference>
<dbReference type="Pfam" id="PF03453">
    <property type="entry name" value="MoeA_N"/>
    <property type="match status" value="1"/>
</dbReference>
<dbReference type="SMART" id="SM00852">
    <property type="entry name" value="MoCF_biosynth"/>
    <property type="match status" value="2"/>
</dbReference>
<dbReference type="SUPFAM" id="SSF63867">
    <property type="entry name" value="MoeA C-terminal domain-like"/>
    <property type="match status" value="1"/>
</dbReference>
<dbReference type="SUPFAM" id="SSF63882">
    <property type="entry name" value="MoeA N-terminal region -like"/>
    <property type="match status" value="1"/>
</dbReference>
<dbReference type="SUPFAM" id="SSF53218">
    <property type="entry name" value="Molybdenum cofactor biosynthesis proteins"/>
    <property type="match status" value="2"/>
</dbReference>
<dbReference type="PROSITE" id="PS01078">
    <property type="entry name" value="MOCF_BIOSYNTHESIS_1"/>
    <property type="match status" value="1"/>
</dbReference>
<evidence type="ECO:0000250" key="1"/>
<evidence type="ECO:0000250" key="2">
    <source>
        <dbReference type="UniProtKB" id="Q03555"/>
    </source>
</evidence>
<evidence type="ECO:0000250" key="3">
    <source>
        <dbReference type="UniProtKB" id="Q8BUV3"/>
    </source>
</evidence>
<evidence type="ECO:0000250" key="4">
    <source>
        <dbReference type="UniProtKB" id="Q9NQX3"/>
    </source>
</evidence>
<evidence type="ECO:0000256" key="5">
    <source>
        <dbReference type="SAM" id="MobiDB-lite"/>
    </source>
</evidence>
<evidence type="ECO:0000269" key="6">
    <source>
    </source>
</evidence>
<evidence type="ECO:0000305" key="7"/>
<evidence type="ECO:0000305" key="8">
    <source>
    </source>
</evidence>
<name>GEPH_CHICK</name>
<gene>
    <name type="primary">GPHN</name>
</gene>